<gene>
    <name type="primary">Acta2</name>
    <name type="synonym">Actsa</name>
    <name type="synonym">Actvs</name>
</gene>
<dbReference type="EC" id="3.6.4.-" evidence="5"/>
<dbReference type="EMBL" id="X13297">
    <property type="protein sequence ID" value="CAA31659.1"/>
    <property type="molecule type" value="mRNA"/>
</dbReference>
<dbReference type="EMBL" id="AK017374">
    <property type="protein sequence ID" value="BAB30715.1"/>
    <property type="molecule type" value="mRNA"/>
</dbReference>
<dbReference type="EMBL" id="BC064800">
    <property type="protein sequence ID" value="AAH64800.1"/>
    <property type="molecule type" value="mRNA"/>
</dbReference>
<dbReference type="EMBL" id="M57409">
    <property type="status" value="NOT_ANNOTATED_CDS"/>
    <property type="molecule type" value="Genomic_DNA"/>
</dbReference>
<dbReference type="CCDS" id="CCDS29757.1"/>
<dbReference type="PIR" id="S02135">
    <property type="entry name" value="A22224"/>
</dbReference>
<dbReference type="RefSeq" id="NP_031418.1">
    <property type="nucleotide sequence ID" value="NM_007392.3"/>
</dbReference>
<dbReference type="SMR" id="P62737"/>
<dbReference type="BioGRID" id="197952">
    <property type="interactions" value="21"/>
</dbReference>
<dbReference type="CORUM" id="P62737"/>
<dbReference type="FunCoup" id="P62737">
    <property type="interactions" value="478"/>
</dbReference>
<dbReference type="IntAct" id="P62737">
    <property type="interactions" value="5"/>
</dbReference>
<dbReference type="MINT" id="P62737"/>
<dbReference type="STRING" id="10090.ENSMUSP00000048218"/>
<dbReference type="GlyGen" id="P62737">
    <property type="glycosylation" value="3 sites, 1 N-linked glycan (1 site), 1 O-linked glycan (2 sites)"/>
</dbReference>
<dbReference type="iPTMnet" id="P62737"/>
<dbReference type="PhosphoSitePlus" id="P62737"/>
<dbReference type="SwissPalm" id="P62737"/>
<dbReference type="REPRODUCTION-2DPAGE" id="P62737"/>
<dbReference type="CPTAC" id="non-CPTAC-3327"/>
<dbReference type="CPTAC" id="non-CPTAC-3440"/>
<dbReference type="jPOST" id="P62737"/>
<dbReference type="PaxDb" id="10090-ENSMUSP00000048218"/>
<dbReference type="PeptideAtlas" id="P62737"/>
<dbReference type="ProteomicsDB" id="285544"/>
<dbReference type="Pumba" id="P62737"/>
<dbReference type="Antibodypedia" id="30207">
    <property type="antibodies" value="1558 antibodies from 52 providers"/>
</dbReference>
<dbReference type="DNASU" id="11475"/>
<dbReference type="Ensembl" id="ENSMUST00000039631.10">
    <property type="protein sequence ID" value="ENSMUSP00000048218.9"/>
    <property type="gene ID" value="ENSMUSG00000035783.10"/>
</dbReference>
<dbReference type="GeneID" id="11475"/>
<dbReference type="KEGG" id="mmu:11475"/>
<dbReference type="UCSC" id="uc008hgg.2">
    <property type="organism name" value="mouse"/>
</dbReference>
<dbReference type="AGR" id="MGI:87909"/>
<dbReference type="CTD" id="59"/>
<dbReference type="MGI" id="MGI:87909">
    <property type="gene designation" value="Acta2"/>
</dbReference>
<dbReference type="VEuPathDB" id="HostDB:ENSMUSG00000035783"/>
<dbReference type="eggNOG" id="KOG0676">
    <property type="taxonomic scope" value="Eukaryota"/>
</dbReference>
<dbReference type="GeneTree" id="ENSGT00940000154148"/>
<dbReference type="HOGENOM" id="CLU_027965_0_2_1"/>
<dbReference type="InParanoid" id="P62737"/>
<dbReference type="OMA" id="ESCEAAP"/>
<dbReference type="OrthoDB" id="9545632at2759"/>
<dbReference type="PhylomeDB" id="P62737"/>
<dbReference type="TreeFam" id="TF354237"/>
<dbReference type="Reactome" id="R-MMU-445355">
    <property type="pathway name" value="Smooth Muscle Contraction"/>
</dbReference>
<dbReference type="Reactome" id="R-MMU-9913351">
    <property type="pathway name" value="Formation of the dystrophin-glycoprotein complex (DGC)"/>
</dbReference>
<dbReference type="BioGRID-ORCS" id="11475">
    <property type="hits" value="2 hits in 78 CRISPR screens"/>
</dbReference>
<dbReference type="ChiTaRS" id="Acta2">
    <property type="organism name" value="mouse"/>
</dbReference>
<dbReference type="PRO" id="PR:P62737"/>
<dbReference type="Proteomes" id="UP000000589">
    <property type="component" value="Chromosome 19"/>
</dbReference>
<dbReference type="RNAct" id="P62737">
    <property type="molecule type" value="protein"/>
</dbReference>
<dbReference type="Bgee" id="ENSMUSG00000035783">
    <property type="expression patterns" value="Expressed in ascending aorta and 264 other cell types or tissues"/>
</dbReference>
<dbReference type="ExpressionAtlas" id="P62737">
    <property type="expression patterns" value="baseline and differential"/>
</dbReference>
<dbReference type="GO" id="GO:0015629">
    <property type="term" value="C:actin cytoskeleton"/>
    <property type="evidence" value="ECO:0000314"/>
    <property type="project" value="MGI"/>
</dbReference>
<dbReference type="GO" id="GO:0005604">
    <property type="term" value="C:basement membrane"/>
    <property type="evidence" value="ECO:0007669"/>
    <property type="project" value="Ensembl"/>
</dbReference>
<dbReference type="GO" id="GO:0044297">
    <property type="term" value="C:cell body"/>
    <property type="evidence" value="ECO:0000250"/>
    <property type="project" value="AgBase"/>
</dbReference>
<dbReference type="GO" id="GO:0005737">
    <property type="term" value="C:cytoplasm"/>
    <property type="evidence" value="ECO:0000314"/>
    <property type="project" value="MGI"/>
</dbReference>
<dbReference type="GO" id="GO:0005856">
    <property type="term" value="C:cytoskeleton"/>
    <property type="evidence" value="ECO:0000314"/>
    <property type="project" value="MGI"/>
</dbReference>
<dbReference type="GO" id="GO:0030175">
    <property type="term" value="C:filopodium"/>
    <property type="evidence" value="ECO:0000250"/>
    <property type="project" value="AgBase"/>
</dbReference>
<dbReference type="GO" id="GO:0030027">
    <property type="term" value="C:lamellipodium"/>
    <property type="evidence" value="ECO:0000250"/>
    <property type="project" value="AgBase"/>
</dbReference>
<dbReference type="GO" id="GO:0031514">
    <property type="term" value="C:motile cilium"/>
    <property type="evidence" value="ECO:0000314"/>
    <property type="project" value="MGI"/>
</dbReference>
<dbReference type="GO" id="GO:0032991">
    <property type="term" value="C:protein-containing complex"/>
    <property type="evidence" value="ECO:0007669"/>
    <property type="project" value="Ensembl"/>
</dbReference>
<dbReference type="GO" id="GO:0030485">
    <property type="term" value="C:smooth muscle contractile fiber"/>
    <property type="evidence" value="ECO:0000314"/>
    <property type="project" value="MGI"/>
</dbReference>
<dbReference type="GO" id="GO:0001725">
    <property type="term" value="C:stress fiber"/>
    <property type="evidence" value="ECO:0007669"/>
    <property type="project" value="Ensembl"/>
</dbReference>
<dbReference type="GO" id="GO:0005524">
    <property type="term" value="F:ATP binding"/>
    <property type="evidence" value="ECO:0007669"/>
    <property type="project" value="UniProtKB-KW"/>
</dbReference>
<dbReference type="GO" id="GO:0016787">
    <property type="term" value="F:hydrolase activity"/>
    <property type="evidence" value="ECO:0007669"/>
    <property type="project" value="UniProtKB-KW"/>
</dbReference>
<dbReference type="GO" id="GO:0019901">
    <property type="term" value="F:protein kinase binding"/>
    <property type="evidence" value="ECO:0000353"/>
    <property type="project" value="ParkinsonsUK-UCL"/>
</dbReference>
<dbReference type="GO" id="GO:0071560">
    <property type="term" value="P:cellular response to transforming growth factor beta stimulus"/>
    <property type="evidence" value="ECO:0007669"/>
    <property type="project" value="Ensembl"/>
</dbReference>
<dbReference type="GO" id="GO:0072144">
    <property type="term" value="P:glomerular mesangial cell development"/>
    <property type="evidence" value="ECO:0007669"/>
    <property type="project" value="Ensembl"/>
</dbReference>
<dbReference type="GO" id="GO:0072051">
    <property type="term" value="P:juxtaglomerular apparatus development"/>
    <property type="evidence" value="ECO:0007669"/>
    <property type="project" value="Ensembl"/>
</dbReference>
<dbReference type="GO" id="GO:0090131">
    <property type="term" value="P:mesenchyme migration"/>
    <property type="evidence" value="ECO:0000250"/>
    <property type="project" value="AgBase"/>
</dbReference>
<dbReference type="GO" id="GO:0070374">
    <property type="term" value="P:positive regulation of ERK1 and ERK2 cascade"/>
    <property type="evidence" value="ECO:0007669"/>
    <property type="project" value="Ensembl"/>
</dbReference>
<dbReference type="GO" id="GO:0010628">
    <property type="term" value="P:positive regulation of gene expression"/>
    <property type="evidence" value="ECO:0000250"/>
    <property type="project" value="AgBase"/>
</dbReference>
<dbReference type="GO" id="GO:2000491">
    <property type="term" value="P:positive regulation of hepatic stellate cell activation"/>
    <property type="evidence" value="ECO:0007669"/>
    <property type="project" value="Ensembl"/>
</dbReference>
<dbReference type="GO" id="GO:0061874">
    <property type="term" value="P:positive regulation of hepatic stellate cell contraction"/>
    <property type="evidence" value="ECO:0007669"/>
    <property type="project" value="Ensembl"/>
</dbReference>
<dbReference type="GO" id="GO:0061870">
    <property type="term" value="P:positive regulation of hepatic stellate cell migration"/>
    <property type="evidence" value="ECO:0007669"/>
    <property type="project" value="Ensembl"/>
</dbReference>
<dbReference type="GO" id="GO:0008217">
    <property type="term" value="P:regulation of blood pressure"/>
    <property type="evidence" value="ECO:0000315"/>
    <property type="project" value="MGI"/>
</dbReference>
<dbReference type="GO" id="GO:0009615">
    <property type="term" value="P:response to virus"/>
    <property type="evidence" value="ECO:0007669"/>
    <property type="project" value="Ensembl"/>
</dbReference>
<dbReference type="GO" id="GO:0014829">
    <property type="term" value="P:vascular associated smooth muscle contraction"/>
    <property type="evidence" value="ECO:0000315"/>
    <property type="project" value="MGI"/>
</dbReference>
<dbReference type="CDD" id="cd10224">
    <property type="entry name" value="ASKHA_NBD_actin"/>
    <property type="match status" value="1"/>
</dbReference>
<dbReference type="FunFam" id="3.30.420.40:FF:000131">
    <property type="entry name" value="Actin, alpha skeletal muscle"/>
    <property type="match status" value="1"/>
</dbReference>
<dbReference type="FunFam" id="3.30.420.40:FF:000291">
    <property type="entry name" value="Actin, alpha skeletal muscle"/>
    <property type="match status" value="1"/>
</dbReference>
<dbReference type="FunFam" id="3.90.640.10:FF:000047">
    <property type="entry name" value="Actin, alpha skeletal muscle"/>
    <property type="match status" value="1"/>
</dbReference>
<dbReference type="FunFam" id="3.30.420.40:FF:000058">
    <property type="entry name" value="Putative actin-related protein 5"/>
    <property type="match status" value="1"/>
</dbReference>
<dbReference type="Gene3D" id="3.30.420.40">
    <property type="match status" value="2"/>
</dbReference>
<dbReference type="Gene3D" id="3.90.640.10">
    <property type="entry name" value="Actin, Chain A, domain 4"/>
    <property type="match status" value="1"/>
</dbReference>
<dbReference type="InterPro" id="IPR004000">
    <property type="entry name" value="Actin"/>
</dbReference>
<dbReference type="InterPro" id="IPR020902">
    <property type="entry name" value="Actin/actin-like_CS"/>
</dbReference>
<dbReference type="InterPro" id="IPR004001">
    <property type="entry name" value="Actin_CS"/>
</dbReference>
<dbReference type="InterPro" id="IPR043129">
    <property type="entry name" value="ATPase_NBD"/>
</dbReference>
<dbReference type="PANTHER" id="PTHR11937">
    <property type="entry name" value="ACTIN"/>
    <property type="match status" value="1"/>
</dbReference>
<dbReference type="Pfam" id="PF00022">
    <property type="entry name" value="Actin"/>
    <property type="match status" value="1"/>
</dbReference>
<dbReference type="PRINTS" id="PR00190">
    <property type="entry name" value="ACTIN"/>
</dbReference>
<dbReference type="SMART" id="SM00268">
    <property type="entry name" value="ACTIN"/>
    <property type="match status" value="1"/>
</dbReference>
<dbReference type="SUPFAM" id="SSF53067">
    <property type="entry name" value="Actin-like ATPase domain"/>
    <property type="match status" value="2"/>
</dbReference>
<dbReference type="PROSITE" id="PS00406">
    <property type="entry name" value="ACTINS_1"/>
    <property type="match status" value="1"/>
</dbReference>
<dbReference type="PROSITE" id="PS00432">
    <property type="entry name" value="ACTINS_2"/>
    <property type="match status" value="1"/>
</dbReference>
<dbReference type="PROSITE" id="PS01132">
    <property type="entry name" value="ACTINS_ACT_LIKE"/>
    <property type="match status" value="1"/>
</dbReference>
<reference key="1">
    <citation type="journal article" date="1988" name="Nucleic Acids Res.">
        <title>Nucleotide sequence of a mouse vascular smooth muscle alpha-actin cDNA.</title>
        <authorList>
            <person name="Min B.H."/>
            <person name="Strauch A.R."/>
            <person name="Foster D.N."/>
        </authorList>
    </citation>
    <scope>NUCLEOTIDE SEQUENCE [MRNA]</scope>
    <source>
        <strain>C3H/HeJ</strain>
    </source>
</reference>
<reference key="2">
    <citation type="journal article" date="2005" name="Science">
        <title>The transcriptional landscape of the mammalian genome.</title>
        <authorList>
            <person name="Carninci P."/>
            <person name="Kasukawa T."/>
            <person name="Katayama S."/>
            <person name="Gough J."/>
            <person name="Frith M.C."/>
            <person name="Maeda N."/>
            <person name="Oyama R."/>
            <person name="Ravasi T."/>
            <person name="Lenhard B."/>
            <person name="Wells C."/>
            <person name="Kodzius R."/>
            <person name="Shimokawa K."/>
            <person name="Bajic V.B."/>
            <person name="Brenner S.E."/>
            <person name="Batalov S."/>
            <person name="Forrest A.R."/>
            <person name="Zavolan M."/>
            <person name="Davis M.J."/>
            <person name="Wilming L.G."/>
            <person name="Aidinis V."/>
            <person name="Allen J.E."/>
            <person name="Ambesi-Impiombato A."/>
            <person name="Apweiler R."/>
            <person name="Aturaliya R.N."/>
            <person name="Bailey T.L."/>
            <person name="Bansal M."/>
            <person name="Baxter L."/>
            <person name="Beisel K.W."/>
            <person name="Bersano T."/>
            <person name="Bono H."/>
            <person name="Chalk A.M."/>
            <person name="Chiu K.P."/>
            <person name="Choudhary V."/>
            <person name="Christoffels A."/>
            <person name="Clutterbuck D.R."/>
            <person name="Crowe M.L."/>
            <person name="Dalla E."/>
            <person name="Dalrymple B.P."/>
            <person name="de Bono B."/>
            <person name="Della Gatta G."/>
            <person name="di Bernardo D."/>
            <person name="Down T."/>
            <person name="Engstrom P."/>
            <person name="Fagiolini M."/>
            <person name="Faulkner G."/>
            <person name="Fletcher C.F."/>
            <person name="Fukushima T."/>
            <person name="Furuno M."/>
            <person name="Futaki S."/>
            <person name="Gariboldi M."/>
            <person name="Georgii-Hemming P."/>
            <person name="Gingeras T.R."/>
            <person name="Gojobori T."/>
            <person name="Green R.E."/>
            <person name="Gustincich S."/>
            <person name="Harbers M."/>
            <person name="Hayashi Y."/>
            <person name="Hensch T.K."/>
            <person name="Hirokawa N."/>
            <person name="Hill D."/>
            <person name="Huminiecki L."/>
            <person name="Iacono M."/>
            <person name="Ikeo K."/>
            <person name="Iwama A."/>
            <person name="Ishikawa T."/>
            <person name="Jakt M."/>
            <person name="Kanapin A."/>
            <person name="Katoh M."/>
            <person name="Kawasawa Y."/>
            <person name="Kelso J."/>
            <person name="Kitamura H."/>
            <person name="Kitano H."/>
            <person name="Kollias G."/>
            <person name="Krishnan S.P."/>
            <person name="Kruger A."/>
            <person name="Kummerfeld S.K."/>
            <person name="Kurochkin I.V."/>
            <person name="Lareau L.F."/>
            <person name="Lazarevic D."/>
            <person name="Lipovich L."/>
            <person name="Liu J."/>
            <person name="Liuni S."/>
            <person name="McWilliam S."/>
            <person name="Madan Babu M."/>
            <person name="Madera M."/>
            <person name="Marchionni L."/>
            <person name="Matsuda H."/>
            <person name="Matsuzawa S."/>
            <person name="Miki H."/>
            <person name="Mignone F."/>
            <person name="Miyake S."/>
            <person name="Morris K."/>
            <person name="Mottagui-Tabar S."/>
            <person name="Mulder N."/>
            <person name="Nakano N."/>
            <person name="Nakauchi H."/>
            <person name="Ng P."/>
            <person name="Nilsson R."/>
            <person name="Nishiguchi S."/>
            <person name="Nishikawa S."/>
            <person name="Nori F."/>
            <person name="Ohara O."/>
            <person name="Okazaki Y."/>
            <person name="Orlando V."/>
            <person name="Pang K.C."/>
            <person name="Pavan W.J."/>
            <person name="Pavesi G."/>
            <person name="Pesole G."/>
            <person name="Petrovsky N."/>
            <person name="Piazza S."/>
            <person name="Reed J."/>
            <person name="Reid J.F."/>
            <person name="Ring B.Z."/>
            <person name="Ringwald M."/>
            <person name="Rost B."/>
            <person name="Ruan Y."/>
            <person name="Salzberg S.L."/>
            <person name="Sandelin A."/>
            <person name="Schneider C."/>
            <person name="Schoenbach C."/>
            <person name="Sekiguchi K."/>
            <person name="Semple C.A."/>
            <person name="Seno S."/>
            <person name="Sessa L."/>
            <person name="Sheng Y."/>
            <person name="Shibata Y."/>
            <person name="Shimada H."/>
            <person name="Shimada K."/>
            <person name="Silva D."/>
            <person name="Sinclair B."/>
            <person name="Sperling S."/>
            <person name="Stupka E."/>
            <person name="Sugiura K."/>
            <person name="Sultana R."/>
            <person name="Takenaka Y."/>
            <person name="Taki K."/>
            <person name="Tammoja K."/>
            <person name="Tan S.L."/>
            <person name="Tang S."/>
            <person name="Taylor M.S."/>
            <person name="Tegner J."/>
            <person name="Teichmann S.A."/>
            <person name="Ueda H.R."/>
            <person name="van Nimwegen E."/>
            <person name="Verardo R."/>
            <person name="Wei C.L."/>
            <person name="Yagi K."/>
            <person name="Yamanishi H."/>
            <person name="Zabarovsky E."/>
            <person name="Zhu S."/>
            <person name="Zimmer A."/>
            <person name="Hide W."/>
            <person name="Bult C."/>
            <person name="Grimmond S.M."/>
            <person name="Teasdale R.D."/>
            <person name="Liu E.T."/>
            <person name="Brusic V."/>
            <person name="Quackenbush J."/>
            <person name="Wahlestedt C."/>
            <person name="Mattick J.S."/>
            <person name="Hume D.A."/>
            <person name="Kai C."/>
            <person name="Sasaki D."/>
            <person name="Tomaru Y."/>
            <person name="Fukuda S."/>
            <person name="Kanamori-Katayama M."/>
            <person name="Suzuki M."/>
            <person name="Aoki J."/>
            <person name="Arakawa T."/>
            <person name="Iida J."/>
            <person name="Imamura K."/>
            <person name="Itoh M."/>
            <person name="Kato T."/>
            <person name="Kawaji H."/>
            <person name="Kawagashira N."/>
            <person name="Kawashima T."/>
            <person name="Kojima M."/>
            <person name="Kondo S."/>
            <person name="Konno H."/>
            <person name="Nakano K."/>
            <person name="Ninomiya N."/>
            <person name="Nishio T."/>
            <person name="Okada M."/>
            <person name="Plessy C."/>
            <person name="Shibata K."/>
            <person name="Shiraki T."/>
            <person name="Suzuki S."/>
            <person name="Tagami M."/>
            <person name="Waki K."/>
            <person name="Watahiki A."/>
            <person name="Okamura-Oho Y."/>
            <person name="Suzuki H."/>
            <person name="Kawai J."/>
            <person name="Hayashizaki Y."/>
        </authorList>
    </citation>
    <scope>NUCLEOTIDE SEQUENCE [LARGE SCALE MRNA]</scope>
    <source>
        <strain>C57BL/6J</strain>
        <tissue>Head</tissue>
    </source>
</reference>
<reference key="3">
    <citation type="journal article" date="2004" name="Genome Res.">
        <title>The status, quality, and expansion of the NIH full-length cDNA project: the Mammalian Gene Collection (MGC).</title>
        <authorList>
            <consortium name="The MGC Project Team"/>
        </authorList>
    </citation>
    <scope>NUCLEOTIDE SEQUENCE [LARGE SCALE MRNA]</scope>
    <source>
        <strain>C3H/He</strain>
        <tissue>Osteoblast</tissue>
    </source>
</reference>
<reference key="4">
    <citation type="journal article" date="1984" name="J. Biol. Chem.">
        <title>A vascular smooth muscle alpha-isoactin biosynthetic intermediate in BC3H1 cells. Identification of acetylcysteine at the NH2 terminus.</title>
        <authorList>
            <person name="Strauch A.R."/>
            <person name="Rubenstein P.A."/>
        </authorList>
    </citation>
    <scope>PROTEIN SEQUENCE OF 3-20</scope>
    <scope>CLEAVAGE OF INITIATOR METHIONINE</scope>
    <scope>ACETYLATION AT CYS-2</scope>
    <scope>ACETYLATION AT GLU-3</scope>
</reference>
<reference key="5">
    <citation type="journal article" date="1990" name="J. Biol. Chem.">
        <title>The 5'-flanking region of the mouse vascular smooth muscle alpha-actin gene contains evolutionarily conserved sequence motifs within a functional promoter.</title>
        <authorList>
            <person name="Min B.H."/>
            <person name="Foster D.N."/>
            <person name="Strauch A.R."/>
        </authorList>
    </citation>
    <scope>NUCLEOTIDE SEQUENCE [GENOMIC DNA] OF 1-7</scope>
</reference>
<reference key="6">
    <citation type="submission" date="2009-01" db="UniProtKB">
        <authorList>
            <person name="Lubec G."/>
            <person name="Kang S.U."/>
            <person name="Sunyer B."/>
            <person name="Chen W.-Q."/>
        </authorList>
    </citation>
    <scope>PROTEIN SEQUENCE OF 21-41; 53-63; 71-86; 98-115; 186-193; 241-256 AND 318-328</scope>
    <scope>IDENTIFICATION BY MASS SPECTROMETRY</scope>
    <source>
        <strain>C57BL/6J</strain>
        <strain>OF1</strain>
        <tissue>Brain</tissue>
        <tissue>Hippocampus</tissue>
    </source>
</reference>
<reference key="7">
    <citation type="journal article" date="2011" name="Parasitology">
        <title>Dynamics of Sept4 expression in fibrotic livers of mice infected with Schistosoma japonicum.</title>
        <authorList>
            <person name="Duan Y.N."/>
            <person name="Qian H.Y."/>
            <person name="Qin Y.W."/>
            <person name="Zhu D.D."/>
            <person name="He X.X."/>
            <person name="Zhou Q."/>
            <person name="Yang Y.N."/>
            <person name="Bao J."/>
            <person name="Feng J.R."/>
            <person name="Sun W."/>
            <person name="Chen J.L."/>
        </authorList>
    </citation>
    <scope>TISSUE SPECIFICITY</scope>
    <scope>INDUCTION BY S.JAPONICUM INFECTION</scope>
</reference>
<reference key="8">
    <citation type="journal article" date="2013" name="Mol. Cell">
        <title>MsrB1 and MICALs regulate actin assembly and macrophage function via reversible stereoselective methionine oxidation.</title>
        <authorList>
            <person name="Lee B.C."/>
            <person name="Peterfi Z."/>
            <person name="Hoffmann F.W."/>
            <person name="Moore R.E."/>
            <person name="Kaya A."/>
            <person name="Avanesov A."/>
            <person name="Tarrago L."/>
            <person name="Zhou Y."/>
            <person name="Weerapana E."/>
            <person name="Fomenko D.E."/>
            <person name="Hoffmann P.R."/>
            <person name="Gladyshev V.N."/>
        </authorList>
    </citation>
    <scope>OXIDATION AT MET-46 AND MET-49</scope>
    <scope>DEOXIDATION AT MET-46 AND MET-49</scope>
</reference>
<reference key="9">
    <citation type="journal article" date="2017" name="Circ. Res.">
        <title>Polydom Is an Extracellular Matrix Protein Involved in Lymphatic Vessel Remodeling.</title>
        <authorList>
            <person name="Morooka N."/>
            <person name="Futaki S."/>
            <person name="Sato-Nishiuchi R."/>
            <person name="Nishino M."/>
            <person name="Totani Y."/>
            <person name="Shimono C."/>
            <person name="Nakano I."/>
            <person name="Nakajima H."/>
            <person name="Mochizuki N."/>
            <person name="Sekiguchi K."/>
        </authorList>
    </citation>
    <scope>DEVELOPMENTAL STAGE</scope>
</reference>
<reference key="10">
    <citation type="journal article" date="2022" name="Science">
        <title>Actin maturation requires the ACTMAP/C19orf54 protease.</title>
        <authorList>
            <person name="Haahr P."/>
            <person name="Galli R.A."/>
            <person name="van den Hengel L.G."/>
            <person name="Bleijerveld O.B."/>
            <person name="Kazokaite-Adomaitiene J."/>
            <person name="Song J.Y."/>
            <person name="Kroese L.J."/>
            <person name="Krimpenfort P."/>
            <person name="Baltissen M.P."/>
            <person name="Vermeulen M."/>
            <person name="Ottenheijm C.A.C."/>
            <person name="Brummelkamp T.R."/>
        </authorList>
    </citation>
    <scope>PROTEOLYTIC CLEAVAGE BY ACTMAP</scope>
    <scope>ACETYLATION AT CYS-2</scope>
</reference>
<comment type="function">
    <text>Actins are highly conserved proteins that are involved in various types of cell motility and are ubiquitously expressed in all eukaryotic cells.</text>
</comment>
<comment type="catalytic activity">
    <reaction evidence="5">
        <text>ATP + H2O = ADP + phosphate + H(+)</text>
        <dbReference type="Rhea" id="RHEA:13065"/>
        <dbReference type="ChEBI" id="CHEBI:15377"/>
        <dbReference type="ChEBI" id="CHEBI:15378"/>
        <dbReference type="ChEBI" id="CHEBI:30616"/>
        <dbReference type="ChEBI" id="CHEBI:43474"/>
        <dbReference type="ChEBI" id="CHEBI:456216"/>
    </reaction>
</comment>
<comment type="subunit">
    <text>Polymerization of globular actin (G-actin) leads to a structural filament (F-actin) in the form of a two-stranded helix. Each actin can bind to 4 others.</text>
</comment>
<comment type="subcellular location">
    <subcellularLocation>
        <location>Cytoplasm</location>
        <location>Cytoskeleton</location>
    </subcellularLocation>
</comment>
<comment type="tissue specificity">
    <text evidence="6">Expressed in the liver (at protein level).</text>
</comment>
<comment type="developmental stage">
    <text evidence="8">Expressed in mesentery venous vessels at 17.5 dpc.</text>
</comment>
<comment type="induction">
    <text evidence="6">Induced by S.japonicum egg-mediated liver fibrosis at the site of egg granulomas; expression peakes at 12 weeks post infection with expression decreasing thereafter.</text>
</comment>
<comment type="PTM">
    <text evidence="7">Oxidation of Met-46 and Met-49 by MICALs (MICAL1, MICAL2 or MICAL3) to form methionine sulfoxide promotes actin filament depolymerization. MICAL1 and MICAL2 produce the (R)-S-oxide form. The (R)-S-oxide form is reverted by MSRB1 and MSRB2, which promotes actin repolymerization.</text>
</comment>
<comment type="PTM">
    <text evidence="1">Monomethylation at Lys-86 (K84me1) regulates actin-myosin interaction and actomyosin-dependent processes. Demethylation by ALKBH4 is required for maintaining actomyosin dynamics supporting normal cleavage furrow ingression during cytokinesis and cell migration (By similarity).</text>
</comment>
<comment type="PTM">
    <text evidence="2">Methylated at His-75 by SETD3.</text>
</comment>
<comment type="PTM">
    <molecule>Actin, aortic smooth muscle, intermediate form</molecule>
    <text evidence="9">N-terminal cleavage of acetylated cysteine of intermediate muscle actin by ACTMAP.</text>
</comment>
<comment type="miscellaneous">
    <text>In vertebrates 3 main groups of actin isoforms, alpha, beta and gamma have been identified. The alpha actins are found in muscle tissues and are a major constituent of the contractile apparatus. The beta and gamma actins coexist in most cell types as components of the cytoskeleton and as mediators of internal cell motility.</text>
</comment>
<comment type="similarity">
    <text evidence="11">Belongs to the actin family.</text>
</comment>
<proteinExistence type="evidence at protein level"/>
<protein>
    <recommendedName>
        <fullName>Actin, aortic smooth muscle</fullName>
        <ecNumber evidence="5">3.6.4.-</ecNumber>
    </recommendedName>
    <alternativeName>
        <fullName>Alpha-actin-2</fullName>
    </alternativeName>
    <component>
        <recommendedName>
            <fullName>Actin, aortic smooth muscle, intermediate form</fullName>
        </recommendedName>
    </component>
</protein>
<name>ACTA_MOUSE</name>
<evidence type="ECO:0000250" key="1"/>
<evidence type="ECO:0000250" key="2">
    <source>
        <dbReference type="UniProtKB" id="P62736"/>
    </source>
</evidence>
<evidence type="ECO:0000250" key="3">
    <source>
        <dbReference type="UniProtKB" id="P62739"/>
    </source>
</evidence>
<evidence type="ECO:0000250" key="4">
    <source>
        <dbReference type="UniProtKB" id="P68032"/>
    </source>
</evidence>
<evidence type="ECO:0000250" key="5">
    <source>
        <dbReference type="UniProtKB" id="P68137"/>
    </source>
</evidence>
<evidence type="ECO:0000269" key="6">
    <source>
    </source>
</evidence>
<evidence type="ECO:0000269" key="7">
    <source>
    </source>
</evidence>
<evidence type="ECO:0000269" key="8">
    <source>
    </source>
</evidence>
<evidence type="ECO:0000269" key="9">
    <source>
    </source>
</evidence>
<evidence type="ECO:0000269" key="10">
    <source>
    </source>
</evidence>
<evidence type="ECO:0000305" key="11"/>
<accession>P62737</accession>
<accession>P03996</accession>
<accession>P04108</accession>
<keyword id="KW-0007">Acetylation</keyword>
<keyword id="KW-0067">ATP-binding</keyword>
<keyword id="KW-0963">Cytoplasm</keyword>
<keyword id="KW-0206">Cytoskeleton</keyword>
<keyword id="KW-0903">Direct protein sequencing</keyword>
<keyword id="KW-0378">Hydrolase</keyword>
<keyword id="KW-0488">Methylation</keyword>
<keyword id="KW-0514">Muscle protein</keyword>
<keyword id="KW-0547">Nucleotide-binding</keyword>
<keyword id="KW-0558">Oxidation</keyword>
<keyword id="KW-1185">Reference proteome</keyword>
<feature type="initiator methionine" description="Removed" evidence="10">
    <location>
        <position position="1"/>
    </location>
</feature>
<feature type="chain" id="PRO_0000442605" description="Actin, aortic smooth muscle, intermediate form" evidence="10">
    <location>
        <begin position="2"/>
        <end position="377"/>
    </location>
</feature>
<feature type="chain" id="PRO_0000442606" description="Actin, aortic smooth muscle" evidence="10">
    <location>
        <begin position="3"/>
        <end position="377"/>
    </location>
</feature>
<feature type="modified residue" description="N-acetylcysteine; in intermediate form" evidence="9 10">
    <location>
        <position position="2"/>
    </location>
</feature>
<feature type="modified residue" description="N-acetylglutamate; in Actin, aortic smooth muscle" evidence="10">
    <location>
        <position position="3"/>
    </location>
</feature>
<feature type="modified residue" description="Methionine (R)-sulfoxide" evidence="7">
    <location>
        <position position="46"/>
    </location>
</feature>
<feature type="modified residue" description="Methionine (R)-sulfoxide" evidence="7">
    <location>
        <position position="49"/>
    </location>
</feature>
<feature type="modified residue" description="Tele-methylhistidine" evidence="3">
    <location>
        <position position="75"/>
    </location>
</feature>
<feature type="modified residue" description="N6-methyllysine" evidence="4">
    <location>
        <position position="86"/>
    </location>
</feature>
<sequence length="377" mass="42009">MCEEEDSTALVCDNGSGLCKAGFAGDDAPRAVFPSIVGRPRHQGVMVGMGQKDSYVGDEAQSKRGILTLKYPIEHGIITNWDDMEKIWHHSFYNELRVAPEEHPTLLTEAPLNPKANREKMTQIMFETFNVPAMYVAIQAVLSLYASGRTTGIVLDSGDGVTHNVPIYEGYALPHAIMRLDLAGRDLTDYLMKILTERGYSFVTTAEREIVRDIKEKLCYVALDFENEMATAASSSSLEKSYELPDGQVITIGNERFRCPETLFQPSFIGMESAGIHETTYNSIMKCDIDIRKDLYANNVLSGGTTMYPGIADRMQKEITALAPSTMKIKIIAPPERKYSVWIGGSILASLSTFQQMWISKQEYDEAGPSIVHRKCF</sequence>
<organism>
    <name type="scientific">Mus musculus</name>
    <name type="common">Mouse</name>
    <dbReference type="NCBI Taxonomy" id="10090"/>
    <lineage>
        <taxon>Eukaryota</taxon>
        <taxon>Metazoa</taxon>
        <taxon>Chordata</taxon>
        <taxon>Craniata</taxon>
        <taxon>Vertebrata</taxon>
        <taxon>Euteleostomi</taxon>
        <taxon>Mammalia</taxon>
        <taxon>Eutheria</taxon>
        <taxon>Euarchontoglires</taxon>
        <taxon>Glires</taxon>
        <taxon>Rodentia</taxon>
        <taxon>Myomorpha</taxon>
        <taxon>Muroidea</taxon>
        <taxon>Muridae</taxon>
        <taxon>Murinae</taxon>
        <taxon>Mus</taxon>
        <taxon>Mus</taxon>
    </lineage>
</organism>